<sequence>MTLSNSALGKKSTYKDTYDPTLLFKIPRIDNRKELGIVNDKLPFHGVDIWNAYELSWLDKKGKPCVAIFTFFVPTTSSHIVESKSVKLYLNSFNNFVVDSMEELKRTILQDLSNNTHAEVTGEIFPINTKIEFGSPTGINIDDIDIECSEYGPPNNSLIKHEDVLVEEELNSNLLKSNCLVTGQPDWGTIIIKYKGKKLKHDALLKYLVSFRNCNEFAEQCAERIFTDIKNAINPEFLSIYIIYTRRGGIDICPYRSTDSNYTLPSSKRLIRQ</sequence>
<organism>
    <name type="scientific">Rickettsia bellii (strain OSU 85-389)</name>
    <dbReference type="NCBI Taxonomy" id="391896"/>
    <lineage>
        <taxon>Bacteria</taxon>
        <taxon>Pseudomonadati</taxon>
        <taxon>Pseudomonadota</taxon>
        <taxon>Alphaproteobacteria</taxon>
        <taxon>Rickettsiales</taxon>
        <taxon>Rickettsiaceae</taxon>
        <taxon>Rickettsieae</taxon>
        <taxon>Rickettsia</taxon>
        <taxon>belli group</taxon>
    </lineage>
</organism>
<protein>
    <recommendedName>
        <fullName evidence="1">NADPH-dependent 7-cyano-7-deazaguanine reductase</fullName>
        <ecNumber evidence="1">1.7.1.13</ecNumber>
    </recommendedName>
    <alternativeName>
        <fullName evidence="1">7-cyano-7-carbaguanine reductase</fullName>
    </alternativeName>
    <alternativeName>
        <fullName evidence="1">NADPH-dependent nitrile oxidoreductase</fullName>
    </alternativeName>
    <alternativeName>
        <fullName evidence="1">PreQ(0) reductase</fullName>
    </alternativeName>
</protein>
<reference key="1">
    <citation type="submission" date="2007-09" db="EMBL/GenBank/DDBJ databases">
        <title>Complete genome sequencing of Rickettsia bellii.</title>
        <authorList>
            <person name="Madan A."/>
            <person name="Lee H."/>
            <person name="Madan A."/>
            <person name="Yoon J.-G."/>
            <person name="Ryu G.-Y."/>
            <person name="Dasch G."/>
            <person name="Ereemeva M."/>
        </authorList>
    </citation>
    <scope>NUCLEOTIDE SEQUENCE [LARGE SCALE GENOMIC DNA]</scope>
    <source>
        <strain>OSU 85-389</strain>
    </source>
</reference>
<dbReference type="EC" id="1.7.1.13" evidence="1"/>
<dbReference type="EMBL" id="CP000849">
    <property type="protein sequence ID" value="ABV78485.1"/>
    <property type="molecule type" value="Genomic_DNA"/>
</dbReference>
<dbReference type="RefSeq" id="WP_011477945.1">
    <property type="nucleotide sequence ID" value="NC_009883.1"/>
</dbReference>
<dbReference type="SMR" id="A8GUI9"/>
<dbReference type="KEGG" id="rbo:A1I_00395"/>
<dbReference type="HOGENOM" id="CLU_054738_0_0_5"/>
<dbReference type="UniPathway" id="UPA00392"/>
<dbReference type="GO" id="GO:0005737">
    <property type="term" value="C:cytoplasm"/>
    <property type="evidence" value="ECO:0007669"/>
    <property type="project" value="UniProtKB-SubCell"/>
</dbReference>
<dbReference type="GO" id="GO:0033739">
    <property type="term" value="F:preQ1 synthase activity"/>
    <property type="evidence" value="ECO:0007669"/>
    <property type="project" value="UniProtKB-UniRule"/>
</dbReference>
<dbReference type="GO" id="GO:0008616">
    <property type="term" value="P:queuosine biosynthetic process"/>
    <property type="evidence" value="ECO:0007669"/>
    <property type="project" value="UniProtKB-UniRule"/>
</dbReference>
<dbReference type="GO" id="GO:0006400">
    <property type="term" value="P:tRNA modification"/>
    <property type="evidence" value="ECO:0007669"/>
    <property type="project" value="UniProtKB-UniRule"/>
</dbReference>
<dbReference type="Gene3D" id="3.30.1130.10">
    <property type="match status" value="2"/>
</dbReference>
<dbReference type="HAMAP" id="MF_00817">
    <property type="entry name" value="QueF_type2"/>
    <property type="match status" value="1"/>
</dbReference>
<dbReference type="InterPro" id="IPR043133">
    <property type="entry name" value="GTP-CH-I_C/QueF"/>
</dbReference>
<dbReference type="InterPro" id="IPR050084">
    <property type="entry name" value="NADPH_dep_7-cyano-7-deazaG_red"/>
</dbReference>
<dbReference type="InterPro" id="IPR029500">
    <property type="entry name" value="QueF"/>
</dbReference>
<dbReference type="InterPro" id="IPR029139">
    <property type="entry name" value="QueF_N"/>
</dbReference>
<dbReference type="InterPro" id="IPR016428">
    <property type="entry name" value="QueF_type2"/>
</dbReference>
<dbReference type="NCBIfam" id="TIGR03138">
    <property type="entry name" value="QueF"/>
    <property type="match status" value="1"/>
</dbReference>
<dbReference type="PANTHER" id="PTHR34354">
    <property type="entry name" value="NADPH-DEPENDENT 7-CYANO-7-DEAZAGUANINE REDUCTASE"/>
    <property type="match status" value="1"/>
</dbReference>
<dbReference type="PANTHER" id="PTHR34354:SF1">
    <property type="entry name" value="NADPH-DEPENDENT 7-CYANO-7-DEAZAGUANINE REDUCTASE"/>
    <property type="match status" value="1"/>
</dbReference>
<dbReference type="Pfam" id="PF14489">
    <property type="entry name" value="QueF"/>
    <property type="match status" value="1"/>
</dbReference>
<dbReference type="Pfam" id="PF14819">
    <property type="entry name" value="QueF_N"/>
    <property type="match status" value="1"/>
</dbReference>
<dbReference type="PIRSF" id="PIRSF004750">
    <property type="entry name" value="Nitrile_oxidored_YqcD_prd"/>
    <property type="match status" value="1"/>
</dbReference>
<dbReference type="SUPFAM" id="SSF55620">
    <property type="entry name" value="Tetrahydrobiopterin biosynthesis enzymes-like"/>
    <property type="match status" value="1"/>
</dbReference>
<comment type="function">
    <text evidence="1">Catalyzes the NADPH-dependent reduction of 7-cyano-7-deazaguanine (preQ0) to 7-aminomethyl-7-deazaguanine (preQ1).</text>
</comment>
<comment type="catalytic activity">
    <reaction evidence="1">
        <text>7-aminomethyl-7-carbaguanine + 2 NADP(+) = 7-cyano-7-deazaguanine + 2 NADPH + 3 H(+)</text>
        <dbReference type="Rhea" id="RHEA:13409"/>
        <dbReference type="ChEBI" id="CHEBI:15378"/>
        <dbReference type="ChEBI" id="CHEBI:45075"/>
        <dbReference type="ChEBI" id="CHEBI:57783"/>
        <dbReference type="ChEBI" id="CHEBI:58349"/>
        <dbReference type="ChEBI" id="CHEBI:58703"/>
        <dbReference type="EC" id="1.7.1.13"/>
    </reaction>
</comment>
<comment type="pathway">
    <text evidence="1">tRNA modification; tRNA-queuosine biosynthesis.</text>
</comment>
<comment type="subunit">
    <text evidence="1">Homodimer.</text>
</comment>
<comment type="subcellular location">
    <subcellularLocation>
        <location evidence="1">Cytoplasm</location>
    </subcellularLocation>
</comment>
<comment type="similarity">
    <text evidence="1">Belongs to the GTP cyclohydrolase I family. QueF type 2 subfamily.</text>
</comment>
<accession>A8GUI9</accession>
<name>QUEF_RICB8</name>
<evidence type="ECO:0000255" key="1">
    <source>
        <dbReference type="HAMAP-Rule" id="MF_00817"/>
    </source>
</evidence>
<proteinExistence type="inferred from homology"/>
<keyword id="KW-0963">Cytoplasm</keyword>
<keyword id="KW-0521">NADP</keyword>
<keyword id="KW-0560">Oxidoreductase</keyword>
<keyword id="KW-0671">Queuosine biosynthesis</keyword>
<feature type="chain" id="PRO_1000062357" description="NADPH-dependent 7-cyano-7-deazaguanine reductase">
    <location>
        <begin position="1"/>
        <end position="273"/>
    </location>
</feature>
<feature type="active site" description="Thioimide intermediate" evidence="1">
    <location>
        <position position="179"/>
    </location>
</feature>
<feature type="active site" description="Proton donor" evidence="1">
    <location>
        <position position="186"/>
    </location>
</feature>
<feature type="binding site" evidence="1">
    <location>
        <begin position="81"/>
        <end position="83"/>
    </location>
    <ligand>
        <name>substrate</name>
    </ligand>
</feature>
<feature type="binding site" evidence="1">
    <location>
        <begin position="83"/>
        <end position="84"/>
    </location>
    <ligand>
        <name>NADPH</name>
        <dbReference type="ChEBI" id="CHEBI:57783"/>
    </ligand>
</feature>
<feature type="binding site" evidence="1">
    <location>
        <begin position="218"/>
        <end position="219"/>
    </location>
    <ligand>
        <name>substrate</name>
    </ligand>
</feature>
<feature type="binding site" evidence="1">
    <location>
        <begin position="247"/>
        <end position="248"/>
    </location>
    <ligand>
        <name>NADPH</name>
        <dbReference type="ChEBI" id="CHEBI:57783"/>
    </ligand>
</feature>
<gene>
    <name evidence="1" type="primary">queF</name>
    <name type="ordered locus">A1I_00395</name>
</gene>